<comment type="similarity">
    <text evidence="1">Belongs to the bacterial ribosomal protein bL27 family.</text>
</comment>
<accession>C6E8U2</accession>
<organism>
    <name type="scientific">Geobacter sp. (strain M21)</name>
    <dbReference type="NCBI Taxonomy" id="443144"/>
    <lineage>
        <taxon>Bacteria</taxon>
        <taxon>Pseudomonadati</taxon>
        <taxon>Thermodesulfobacteriota</taxon>
        <taxon>Desulfuromonadia</taxon>
        <taxon>Geobacterales</taxon>
        <taxon>Geobacteraceae</taxon>
        <taxon>Geobacter</taxon>
    </lineage>
</organism>
<feature type="chain" id="PRO_1000211930" description="Large ribosomal subunit protein bL27">
    <location>
        <begin position="1"/>
        <end position="85"/>
    </location>
</feature>
<feature type="region of interest" description="Disordered" evidence="2">
    <location>
        <begin position="1"/>
        <end position="21"/>
    </location>
</feature>
<dbReference type="EMBL" id="CP001661">
    <property type="protein sequence ID" value="ACT16231.1"/>
    <property type="molecule type" value="Genomic_DNA"/>
</dbReference>
<dbReference type="SMR" id="C6E8U2"/>
<dbReference type="STRING" id="443144.GM21_0146"/>
<dbReference type="KEGG" id="gem:GM21_0146"/>
<dbReference type="eggNOG" id="COG0211">
    <property type="taxonomic scope" value="Bacteria"/>
</dbReference>
<dbReference type="HOGENOM" id="CLU_095424_4_0_7"/>
<dbReference type="OrthoDB" id="9803474at2"/>
<dbReference type="GO" id="GO:0022625">
    <property type="term" value="C:cytosolic large ribosomal subunit"/>
    <property type="evidence" value="ECO:0007669"/>
    <property type="project" value="TreeGrafter"/>
</dbReference>
<dbReference type="GO" id="GO:0003735">
    <property type="term" value="F:structural constituent of ribosome"/>
    <property type="evidence" value="ECO:0007669"/>
    <property type="project" value="InterPro"/>
</dbReference>
<dbReference type="GO" id="GO:0006412">
    <property type="term" value="P:translation"/>
    <property type="evidence" value="ECO:0007669"/>
    <property type="project" value="UniProtKB-UniRule"/>
</dbReference>
<dbReference type="FunFam" id="2.40.50.100:FF:000004">
    <property type="entry name" value="50S ribosomal protein L27"/>
    <property type="match status" value="1"/>
</dbReference>
<dbReference type="Gene3D" id="2.40.50.100">
    <property type="match status" value="1"/>
</dbReference>
<dbReference type="HAMAP" id="MF_00539">
    <property type="entry name" value="Ribosomal_bL27"/>
    <property type="match status" value="1"/>
</dbReference>
<dbReference type="InterPro" id="IPR001684">
    <property type="entry name" value="Ribosomal_bL27"/>
</dbReference>
<dbReference type="NCBIfam" id="TIGR00062">
    <property type="entry name" value="L27"/>
    <property type="match status" value="1"/>
</dbReference>
<dbReference type="PANTHER" id="PTHR15893:SF0">
    <property type="entry name" value="LARGE RIBOSOMAL SUBUNIT PROTEIN BL27M"/>
    <property type="match status" value="1"/>
</dbReference>
<dbReference type="PANTHER" id="PTHR15893">
    <property type="entry name" value="RIBOSOMAL PROTEIN L27"/>
    <property type="match status" value="1"/>
</dbReference>
<dbReference type="Pfam" id="PF01016">
    <property type="entry name" value="Ribosomal_L27"/>
    <property type="match status" value="1"/>
</dbReference>
<dbReference type="PRINTS" id="PR00063">
    <property type="entry name" value="RIBOSOMALL27"/>
</dbReference>
<dbReference type="SUPFAM" id="SSF110324">
    <property type="entry name" value="Ribosomal L27 protein-like"/>
    <property type="match status" value="1"/>
</dbReference>
<name>RL27_GEOSM</name>
<evidence type="ECO:0000255" key="1">
    <source>
        <dbReference type="HAMAP-Rule" id="MF_00539"/>
    </source>
</evidence>
<evidence type="ECO:0000256" key="2">
    <source>
        <dbReference type="SAM" id="MobiDB-lite"/>
    </source>
</evidence>
<evidence type="ECO:0000305" key="3"/>
<sequence length="85" mass="9274">MAHKKGVGSSRNGRDSDGQRLGCKKFGGEAVKAGNIIYRQHGTKIHPGNNVGLGKDYTLFALIEGVVKFERMGRDRKKVSVYPAN</sequence>
<protein>
    <recommendedName>
        <fullName evidence="1">Large ribosomal subunit protein bL27</fullName>
    </recommendedName>
    <alternativeName>
        <fullName evidence="3">50S ribosomal protein L27</fullName>
    </alternativeName>
</protein>
<gene>
    <name evidence="1" type="primary">rpmA</name>
    <name type="ordered locus">GM21_0146</name>
</gene>
<reference key="1">
    <citation type="submission" date="2009-07" db="EMBL/GenBank/DDBJ databases">
        <title>Complete sequence of Geobacter sp. M21.</title>
        <authorList>
            <consortium name="US DOE Joint Genome Institute"/>
            <person name="Lucas S."/>
            <person name="Copeland A."/>
            <person name="Lapidus A."/>
            <person name="Glavina del Rio T."/>
            <person name="Dalin E."/>
            <person name="Tice H."/>
            <person name="Bruce D."/>
            <person name="Goodwin L."/>
            <person name="Pitluck S."/>
            <person name="Saunders E."/>
            <person name="Brettin T."/>
            <person name="Detter J.C."/>
            <person name="Han C."/>
            <person name="Larimer F."/>
            <person name="Land M."/>
            <person name="Hauser L."/>
            <person name="Kyrpides N."/>
            <person name="Ovchinnikova G."/>
            <person name="Lovley D."/>
        </authorList>
    </citation>
    <scope>NUCLEOTIDE SEQUENCE [LARGE SCALE GENOMIC DNA]</scope>
    <source>
        <strain>M21</strain>
    </source>
</reference>
<proteinExistence type="inferred from homology"/>
<keyword id="KW-0687">Ribonucleoprotein</keyword>
<keyword id="KW-0689">Ribosomal protein</keyword>